<keyword id="KW-0002">3D-structure</keyword>
<keyword id="KW-1267">Proteomics identification</keyword>
<keyword id="KW-1185">Reference proteome</keyword>
<keyword id="KW-0825">Tumor antigen</keyword>
<accession>P43361</accession>
<accession>Q9BUN9</accession>
<organism>
    <name type="scientific">Homo sapiens</name>
    <name type="common">Human</name>
    <dbReference type="NCBI Taxonomy" id="9606"/>
    <lineage>
        <taxon>Eukaryota</taxon>
        <taxon>Metazoa</taxon>
        <taxon>Chordata</taxon>
        <taxon>Craniata</taxon>
        <taxon>Vertebrata</taxon>
        <taxon>Euteleostomi</taxon>
        <taxon>Mammalia</taxon>
        <taxon>Eutheria</taxon>
        <taxon>Euarchontoglires</taxon>
        <taxon>Primates</taxon>
        <taxon>Haplorrhini</taxon>
        <taxon>Catarrhini</taxon>
        <taxon>Hominidae</taxon>
        <taxon>Homo</taxon>
    </lineage>
</organism>
<dbReference type="EMBL" id="BT007340">
    <property type="protein sequence ID" value="AAP36004.1"/>
    <property type="molecule type" value="mRNA"/>
</dbReference>
<dbReference type="EMBL" id="AC016941">
    <property type="status" value="NOT_ANNOTATED_CDS"/>
    <property type="molecule type" value="Genomic_DNA"/>
</dbReference>
<dbReference type="EMBL" id="CH471169">
    <property type="protein sequence ID" value="EAW99373.1"/>
    <property type="molecule type" value="Genomic_DNA"/>
</dbReference>
<dbReference type="EMBL" id="BC002455">
    <property type="protein sequence ID" value="AAH02455.1"/>
    <property type="molecule type" value="mRNA"/>
</dbReference>
<dbReference type="EMBL" id="BC012744">
    <property type="protein sequence ID" value="AAH12744.1"/>
    <property type="molecule type" value="mRNA"/>
</dbReference>
<dbReference type="EMBL" id="U10693">
    <property type="protein sequence ID" value="AAA68876.1"/>
    <property type="status" value="ALT_TERM"/>
    <property type="molecule type" value="Genomic_DNA"/>
</dbReference>
<dbReference type="CCDS" id="CCDS14692.1"/>
<dbReference type="PIR" id="I38667">
    <property type="entry name" value="I38667"/>
</dbReference>
<dbReference type="RefSeq" id="NP_001159872.1">
    <property type="nucleotide sequence ID" value="NM_001166400.2"/>
</dbReference>
<dbReference type="RefSeq" id="NP_001159873.1">
    <property type="nucleotide sequence ID" value="NM_001166401.2"/>
</dbReference>
<dbReference type="RefSeq" id="NP_005355.2">
    <property type="nucleotide sequence ID" value="NM_005364.4"/>
</dbReference>
<dbReference type="RefSeq" id="XP_016885009.1">
    <property type="nucleotide sequence ID" value="XM_017029520.1"/>
</dbReference>
<dbReference type="PDB" id="8FJB">
    <property type="method" value="EM"/>
    <property type="resolution" value="3.06 A"/>
    <property type="chains" value="C=288-296"/>
</dbReference>
<dbReference type="PDBsum" id="8FJB"/>
<dbReference type="EMDB" id="EMD-29221"/>
<dbReference type="SMR" id="P43361"/>
<dbReference type="BioGRID" id="110281">
    <property type="interactions" value="150"/>
</dbReference>
<dbReference type="FunCoup" id="P43361">
    <property type="interactions" value="9"/>
</dbReference>
<dbReference type="IntAct" id="P43361">
    <property type="interactions" value="146"/>
</dbReference>
<dbReference type="MINT" id="P43361"/>
<dbReference type="STRING" id="9606.ENSP00000438293"/>
<dbReference type="iPTMnet" id="P43361"/>
<dbReference type="PhosphoSitePlus" id="P43361"/>
<dbReference type="BioMuta" id="MAGEA8"/>
<dbReference type="DMDM" id="218511674"/>
<dbReference type="jPOST" id="P43361"/>
<dbReference type="MassIVE" id="P43361"/>
<dbReference type="PaxDb" id="9606-ENSP00000438293"/>
<dbReference type="PeptideAtlas" id="P43361"/>
<dbReference type="ProteomicsDB" id="55623"/>
<dbReference type="Pumba" id="P43361"/>
<dbReference type="Antibodypedia" id="30635">
    <property type="antibodies" value="140 antibodies from 24 providers"/>
</dbReference>
<dbReference type="DNASU" id="4107"/>
<dbReference type="Ensembl" id="ENST00000286482.6">
    <property type="protein sequence ID" value="ENSP00000286482.1"/>
    <property type="gene ID" value="ENSG00000156009.10"/>
</dbReference>
<dbReference type="Ensembl" id="ENST00000535454.5">
    <property type="protein sequence ID" value="ENSP00000438293.1"/>
    <property type="gene ID" value="ENSG00000156009.10"/>
</dbReference>
<dbReference type="Ensembl" id="ENST00000542674.5">
    <property type="protein sequence ID" value="ENSP00000443776.1"/>
    <property type="gene ID" value="ENSG00000156009.10"/>
</dbReference>
<dbReference type="GeneID" id="4107"/>
<dbReference type="KEGG" id="hsa:4107"/>
<dbReference type="MANE-Select" id="ENST00000286482.6">
    <property type="protein sequence ID" value="ENSP00000286482.1"/>
    <property type="RefSeq nucleotide sequence ID" value="NM_005364.5"/>
    <property type="RefSeq protein sequence ID" value="NP_005355.2"/>
</dbReference>
<dbReference type="UCSC" id="uc004fdw.3">
    <property type="organism name" value="human"/>
</dbReference>
<dbReference type="AGR" id="HGNC:6806"/>
<dbReference type="CTD" id="4107"/>
<dbReference type="DisGeNET" id="4107"/>
<dbReference type="GeneCards" id="MAGEA8"/>
<dbReference type="HGNC" id="HGNC:6806">
    <property type="gene designation" value="MAGEA8"/>
</dbReference>
<dbReference type="HPA" id="ENSG00000156009">
    <property type="expression patterns" value="Tissue enriched (placenta)"/>
</dbReference>
<dbReference type="MIM" id="300341">
    <property type="type" value="gene"/>
</dbReference>
<dbReference type="neXtProt" id="NX_P43361"/>
<dbReference type="OpenTargets" id="ENSG00000156009"/>
<dbReference type="PharmGKB" id="PA30552"/>
<dbReference type="VEuPathDB" id="HostDB:ENSG00000156009"/>
<dbReference type="eggNOG" id="KOG4562">
    <property type="taxonomic scope" value="Eukaryota"/>
</dbReference>
<dbReference type="GeneTree" id="ENSGT00940000165348"/>
<dbReference type="HOGENOM" id="CLU_039582_1_1_1"/>
<dbReference type="InParanoid" id="P43361"/>
<dbReference type="OMA" id="VYWELRK"/>
<dbReference type="OrthoDB" id="9484331at2759"/>
<dbReference type="PAN-GO" id="P43361">
    <property type="GO annotations" value="3 GO annotations based on evolutionary models"/>
</dbReference>
<dbReference type="PhylomeDB" id="P43361"/>
<dbReference type="TreeFam" id="TF328505"/>
<dbReference type="PathwayCommons" id="P43361"/>
<dbReference type="SignaLink" id="P43361"/>
<dbReference type="BioGRID-ORCS" id="4107">
    <property type="hits" value="13 hits in 777 CRISPR screens"/>
</dbReference>
<dbReference type="ChiTaRS" id="MAGEA8">
    <property type="organism name" value="human"/>
</dbReference>
<dbReference type="GenomeRNAi" id="4107"/>
<dbReference type="Pharos" id="P43361">
    <property type="development level" value="Tbio"/>
</dbReference>
<dbReference type="PRO" id="PR:P43361"/>
<dbReference type="Proteomes" id="UP000005640">
    <property type="component" value="Chromosome X"/>
</dbReference>
<dbReference type="RNAct" id="P43361">
    <property type="molecule type" value="protein"/>
</dbReference>
<dbReference type="Bgee" id="ENSG00000156009">
    <property type="expression patterns" value="Expressed in placenta and 64 other cell types or tissues"/>
</dbReference>
<dbReference type="GO" id="GO:0005634">
    <property type="term" value="C:nucleus"/>
    <property type="evidence" value="ECO:0000318"/>
    <property type="project" value="GO_Central"/>
</dbReference>
<dbReference type="GO" id="GO:0042826">
    <property type="term" value="F:histone deacetylase binding"/>
    <property type="evidence" value="ECO:0000318"/>
    <property type="project" value="GO_Central"/>
</dbReference>
<dbReference type="GO" id="GO:0000122">
    <property type="term" value="P:negative regulation of transcription by RNA polymerase II"/>
    <property type="evidence" value="ECO:0000318"/>
    <property type="project" value="GO_Central"/>
</dbReference>
<dbReference type="FunFam" id="1.10.10.1200:FF:000002">
    <property type="entry name" value="MAGE family member A11"/>
    <property type="match status" value="1"/>
</dbReference>
<dbReference type="FunFam" id="1.10.10.1210:FF:000001">
    <property type="entry name" value="melanoma-associated antigen D1"/>
    <property type="match status" value="1"/>
</dbReference>
<dbReference type="Gene3D" id="1.10.10.1200">
    <property type="entry name" value="MAGE homology domain, winged helix WH1 motif"/>
    <property type="match status" value="1"/>
</dbReference>
<dbReference type="Gene3D" id="1.10.10.1210">
    <property type="entry name" value="MAGE homology domain, winged helix WH2 motif"/>
    <property type="match status" value="1"/>
</dbReference>
<dbReference type="InterPro" id="IPR037445">
    <property type="entry name" value="MAGE"/>
</dbReference>
<dbReference type="InterPro" id="IPR021072">
    <property type="entry name" value="MAGE_N"/>
</dbReference>
<dbReference type="InterPro" id="IPR041898">
    <property type="entry name" value="MAGE_WH1"/>
</dbReference>
<dbReference type="InterPro" id="IPR041899">
    <property type="entry name" value="MAGE_WH2"/>
</dbReference>
<dbReference type="InterPro" id="IPR002190">
    <property type="entry name" value="MHD_dom"/>
</dbReference>
<dbReference type="PANTHER" id="PTHR11736:SF65">
    <property type="entry name" value="MELANOMA-ASSOCIATED ANTIGEN 8"/>
    <property type="match status" value="1"/>
</dbReference>
<dbReference type="PANTHER" id="PTHR11736">
    <property type="entry name" value="MELANOMA-ASSOCIATED ANTIGEN MAGE ANTIGEN"/>
    <property type="match status" value="1"/>
</dbReference>
<dbReference type="Pfam" id="PF01454">
    <property type="entry name" value="MAGE"/>
    <property type="match status" value="1"/>
</dbReference>
<dbReference type="Pfam" id="PF12440">
    <property type="entry name" value="MAGE_N"/>
    <property type="match status" value="1"/>
</dbReference>
<dbReference type="SMART" id="SM01373">
    <property type="entry name" value="MAGE"/>
    <property type="match status" value="1"/>
</dbReference>
<dbReference type="SMART" id="SM01392">
    <property type="entry name" value="MAGE_N"/>
    <property type="match status" value="1"/>
</dbReference>
<dbReference type="PROSITE" id="PS50838">
    <property type="entry name" value="MAGE"/>
    <property type="match status" value="1"/>
</dbReference>
<comment type="function">
    <text>Not known, though may play a role in embryonal development and tumor transformation or aspects of tumor progression.</text>
</comment>
<comment type="interaction">
    <interactant intactId="EBI-10182930">
        <id>P43361</id>
    </interactant>
    <interactant intactId="EBI-10243741">
        <id>Q5H9J7</id>
        <label>BEX5</label>
    </interactant>
    <organismsDiffer>false</organismsDiffer>
    <experiments>7</experiments>
</comment>
<comment type="interaction">
    <interactant intactId="EBI-10182930">
        <id>P43361</id>
    </interactant>
    <interactant intactId="EBI-1047110">
        <id>Q9P031</id>
        <label>CCDC59</label>
    </interactant>
    <organismsDiffer>false</organismsDiffer>
    <experiments>3</experiments>
</comment>
<comment type="interaction">
    <interactant intactId="EBI-10182930">
        <id>P43361</id>
    </interactant>
    <interactant intactId="EBI-947242">
        <id>P28676</id>
        <label>GCA</label>
    </interactant>
    <organismsDiffer>false</organismsDiffer>
    <experiments>9</experiments>
</comment>
<comment type="interaction">
    <interactant intactId="EBI-10182930">
        <id>P43361</id>
    </interactant>
    <interactant intactId="EBI-21591415">
        <id>P13473-2</id>
        <label>LAMP2</label>
    </interactant>
    <organismsDiffer>false</organismsDiffer>
    <experiments>3</experiments>
</comment>
<comment type="interaction">
    <interactant intactId="EBI-10182930">
        <id>P43361</id>
    </interactant>
    <interactant intactId="EBI-739696">
        <id>P25791</id>
        <label>LMO2</label>
    </interactant>
    <organismsDiffer>false</organismsDiffer>
    <experiments>3</experiments>
</comment>
<comment type="interaction">
    <interactant intactId="EBI-10182930">
        <id>P43361</id>
    </interactant>
    <interactant intactId="EBI-1044504">
        <id>Q9BS40</id>
        <label>LXN</label>
    </interactant>
    <organismsDiffer>false</organismsDiffer>
    <experiments>3</experiments>
</comment>
<comment type="interaction">
    <interactant intactId="EBI-10182930">
        <id>P43361</id>
    </interactant>
    <interactant intactId="EBI-751857">
        <id>O15481</id>
        <label>MAGEB4</label>
    </interactant>
    <organismsDiffer>false</organismsDiffer>
    <experiments>3</experiments>
</comment>
<comment type="interaction">
    <interactant intactId="EBI-10182930">
        <id>P43361</id>
    </interactant>
    <interactant intactId="EBI-744248">
        <id>P40692</id>
        <label>MLH1</label>
    </interactant>
    <organismsDiffer>false</organismsDiffer>
    <experiments>7</experiments>
</comment>
<comment type="interaction">
    <interactant intactId="EBI-10182930">
        <id>P43361</id>
    </interactant>
    <interactant intactId="EBI-742948">
        <id>Q5JR59</id>
        <label>MTUS2</label>
    </interactant>
    <organismsDiffer>false</organismsDiffer>
    <experiments>3</experiments>
</comment>
<comment type="interaction">
    <interactant intactId="EBI-10182930">
        <id>P43361</id>
    </interactant>
    <interactant intactId="EBI-7813714">
        <id>Q13563</id>
        <label>PKD2</label>
    </interactant>
    <organismsDiffer>false</organismsDiffer>
    <experiments>4</experiments>
</comment>
<comment type="interaction">
    <interactant intactId="EBI-10182930">
        <id>P43361</id>
    </interactant>
    <interactant intactId="EBI-2623095">
        <id>Q9Y371</id>
        <label>SH3GLB1</label>
    </interactant>
    <organismsDiffer>false</organismsDiffer>
    <experiments>3</experiments>
</comment>
<comment type="interaction">
    <interactant intactId="EBI-10182930">
        <id>P43361</id>
    </interactant>
    <interactant intactId="EBI-14513896">
        <id>Q9UK13</id>
        <label>ZNF221</label>
    </interactant>
    <organismsDiffer>false</organismsDiffer>
    <experiments>3</experiments>
</comment>
<comment type="interaction">
    <interactant intactId="EBI-10182930">
        <id>P43361</id>
    </interactant>
    <interactant intactId="EBI-12357267">
        <id>Q9NZL3</id>
        <label>ZNF224</label>
    </interactant>
    <organismsDiffer>false</organismsDiffer>
    <experiments>3</experiments>
</comment>
<comment type="interaction">
    <interactant intactId="EBI-10182930">
        <id>P43361</id>
    </interactant>
    <interactant intactId="EBI-740727">
        <id>Q8TAU3</id>
        <label>ZNF417</label>
    </interactant>
    <organismsDiffer>false</organismsDiffer>
    <experiments>3</experiments>
</comment>
<comment type="tissue specificity">
    <text>Expressed in many tumors of several types, such as melanoma, head and neck squamous cell carcinoma, lung carcinoma and breast carcinoma, but not in normal tissues except for testis and placenta.</text>
</comment>
<gene>
    <name type="primary">MAGEA8</name>
    <name type="synonym">MAGE8</name>
</gene>
<protein>
    <recommendedName>
        <fullName>Melanoma-associated antigen 8</fullName>
    </recommendedName>
    <alternativeName>
        <fullName>Cancer/testis antigen 1.8</fullName>
        <shortName>CT1.8</shortName>
    </alternativeName>
    <alternativeName>
        <fullName>MAGE-8 antigen</fullName>
    </alternativeName>
</protein>
<feature type="chain" id="PRO_0000156707" description="Melanoma-associated antigen 8">
    <location>
        <begin position="1"/>
        <end position="318"/>
    </location>
</feature>
<feature type="domain" description="MAGE" evidence="1">
    <location>
        <begin position="112"/>
        <end position="311"/>
    </location>
</feature>
<feature type="region of interest" description="Disordered" evidence="2">
    <location>
        <begin position="1"/>
        <end position="103"/>
    </location>
</feature>
<feature type="sequence variant" id="VAR_053494" description="In dbSNP:rs35744768.">
    <original>R</original>
    <variation>H</variation>
    <location>
        <position position="121"/>
    </location>
</feature>
<feature type="sequence variant" id="VAR_053495" description="In dbSNP:rs12010332.">
    <original>S</original>
    <variation>F</variation>
    <location>
        <position position="306"/>
    </location>
</feature>
<evidence type="ECO:0000255" key="1">
    <source>
        <dbReference type="PROSITE-ProRule" id="PRU00127"/>
    </source>
</evidence>
<evidence type="ECO:0000256" key="2">
    <source>
        <dbReference type="SAM" id="MobiDB-lite"/>
    </source>
</evidence>
<proteinExistence type="evidence at protein level"/>
<sequence length="318" mass="35215">MLLGQKSQRYKAEEGLQAQGEAPGLMDVQIPTAEEQKAASSSSTLIMGTLEEVTDSGSPSPPQSPEGASSSLTVTDSTLWSQSDEGSSSNEEEGPSTSPDPAHLESLFREALDEKVAELVRFLLRKYQIKEPVTKAEMLESVIKNYKNHFPDIFSKASECMQVIFGIDVKEVDPAGHSYILVTCLGLSYDGLLGDDQSTPKTGLLIIVLGMILMEGSRAPEEAIWEALSVMGLYDGREHSVYWKLRKLLTQEWVQENYLEYRQAPGSDPVRYEFLWGPRALAETSYVKVLEHVVRVNARVRISYPSLHEEALGEEKGV</sequence>
<name>MAGA8_HUMAN</name>
<reference key="1">
    <citation type="submission" date="2003-08" db="EMBL/GenBank/DDBJ databases">
        <title>Cloning of human full-length CDSs in BD Creator(TM) system donor vector.</title>
        <authorList>
            <person name="Kalnine N."/>
            <person name="Chen X."/>
            <person name="Rolfs A."/>
            <person name="Halleck A."/>
            <person name="Hines L."/>
            <person name="Eisenstein S."/>
            <person name="Koundinya M."/>
            <person name="Raphael J."/>
            <person name="Moreira D."/>
            <person name="Kelley T."/>
            <person name="LaBaer J."/>
            <person name="Lin Y."/>
            <person name="Phelan M."/>
            <person name="Farmer A."/>
        </authorList>
    </citation>
    <scope>NUCLEOTIDE SEQUENCE [LARGE SCALE MRNA]</scope>
</reference>
<reference key="2">
    <citation type="journal article" date="2005" name="Nature">
        <title>The DNA sequence of the human X chromosome.</title>
        <authorList>
            <person name="Ross M.T."/>
            <person name="Grafham D.V."/>
            <person name="Coffey A.J."/>
            <person name="Scherer S."/>
            <person name="McLay K."/>
            <person name="Muzny D."/>
            <person name="Platzer M."/>
            <person name="Howell G.R."/>
            <person name="Burrows C."/>
            <person name="Bird C.P."/>
            <person name="Frankish A."/>
            <person name="Lovell F.L."/>
            <person name="Howe K.L."/>
            <person name="Ashurst J.L."/>
            <person name="Fulton R.S."/>
            <person name="Sudbrak R."/>
            <person name="Wen G."/>
            <person name="Jones M.C."/>
            <person name="Hurles M.E."/>
            <person name="Andrews T.D."/>
            <person name="Scott C.E."/>
            <person name="Searle S."/>
            <person name="Ramser J."/>
            <person name="Whittaker A."/>
            <person name="Deadman R."/>
            <person name="Carter N.P."/>
            <person name="Hunt S.E."/>
            <person name="Chen R."/>
            <person name="Cree A."/>
            <person name="Gunaratne P."/>
            <person name="Havlak P."/>
            <person name="Hodgson A."/>
            <person name="Metzker M.L."/>
            <person name="Richards S."/>
            <person name="Scott G."/>
            <person name="Steffen D."/>
            <person name="Sodergren E."/>
            <person name="Wheeler D.A."/>
            <person name="Worley K.C."/>
            <person name="Ainscough R."/>
            <person name="Ambrose K.D."/>
            <person name="Ansari-Lari M.A."/>
            <person name="Aradhya S."/>
            <person name="Ashwell R.I."/>
            <person name="Babbage A.K."/>
            <person name="Bagguley C.L."/>
            <person name="Ballabio A."/>
            <person name="Banerjee R."/>
            <person name="Barker G.E."/>
            <person name="Barlow K.F."/>
            <person name="Barrett I.P."/>
            <person name="Bates K.N."/>
            <person name="Beare D.M."/>
            <person name="Beasley H."/>
            <person name="Beasley O."/>
            <person name="Beck A."/>
            <person name="Bethel G."/>
            <person name="Blechschmidt K."/>
            <person name="Brady N."/>
            <person name="Bray-Allen S."/>
            <person name="Bridgeman A.M."/>
            <person name="Brown A.J."/>
            <person name="Brown M.J."/>
            <person name="Bonnin D."/>
            <person name="Bruford E.A."/>
            <person name="Buhay C."/>
            <person name="Burch P."/>
            <person name="Burford D."/>
            <person name="Burgess J."/>
            <person name="Burrill W."/>
            <person name="Burton J."/>
            <person name="Bye J.M."/>
            <person name="Carder C."/>
            <person name="Carrel L."/>
            <person name="Chako J."/>
            <person name="Chapman J.C."/>
            <person name="Chavez D."/>
            <person name="Chen E."/>
            <person name="Chen G."/>
            <person name="Chen Y."/>
            <person name="Chen Z."/>
            <person name="Chinault C."/>
            <person name="Ciccodicola A."/>
            <person name="Clark S.Y."/>
            <person name="Clarke G."/>
            <person name="Clee C.M."/>
            <person name="Clegg S."/>
            <person name="Clerc-Blankenburg K."/>
            <person name="Clifford K."/>
            <person name="Cobley V."/>
            <person name="Cole C.G."/>
            <person name="Conquer J.S."/>
            <person name="Corby N."/>
            <person name="Connor R.E."/>
            <person name="David R."/>
            <person name="Davies J."/>
            <person name="Davis C."/>
            <person name="Davis J."/>
            <person name="Delgado O."/>
            <person name="Deshazo D."/>
            <person name="Dhami P."/>
            <person name="Ding Y."/>
            <person name="Dinh H."/>
            <person name="Dodsworth S."/>
            <person name="Draper H."/>
            <person name="Dugan-Rocha S."/>
            <person name="Dunham A."/>
            <person name="Dunn M."/>
            <person name="Durbin K.J."/>
            <person name="Dutta I."/>
            <person name="Eades T."/>
            <person name="Ellwood M."/>
            <person name="Emery-Cohen A."/>
            <person name="Errington H."/>
            <person name="Evans K.L."/>
            <person name="Faulkner L."/>
            <person name="Francis F."/>
            <person name="Frankland J."/>
            <person name="Fraser A.E."/>
            <person name="Galgoczy P."/>
            <person name="Gilbert J."/>
            <person name="Gill R."/>
            <person name="Gloeckner G."/>
            <person name="Gregory S.G."/>
            <person name="Gribble S."/>
            <person name="Griffiths C."/>
            <person name="Grocock R."/>
            <person name="Gu Y."/>
            <person name="Gwilliam R."/>
            <person name="Hamilton C."/>
            <person name="Hart E.A."/>
            <person name="Hawes A."/>
            <person name="Heath P.D."/>
            <person name="Heitmann K."/>
            <person name="Hennig S."/>
            <person name="Hernandez J."/>
            <person name="Hinzmann B."/>
            <person name="Ho S."/>
            <person name="Hoffs M."/>
            <person name="Howden P.J."/>
            <person name="Huckle E.J."/>
            <person name="Hume J."/>
            <person name="Hunt P.J."/>
            <person name="Hunt A.R."/>
            <person name="Isherwood J."/>
            <person name="Jacob L."/>
            <person name="Johnson D."/>
            <person name="Jones S."/>
            <person name="de Jong P.J."/>
            <person name="Joseph S.S."/>
            <person name="Keenan S."/>
            <person name="Kelly S."/>
            <person name="Kershaw J.K."/>
            <person name="Khan Z."/>
            <person name="Kioschis P."/>
            <person name="Klages S."/>
            <person name="Knights A.J."/>
            <person name="Kosiura A."/>
            <person name="Kovar-Smith C."/>
            <person name="Laird G.K."/>
            <person name="Langford C."/>
            <person name="Lawlor S."/>
            <person name="Leversha M."/>
            <person name="Lewis L."/>
            <person name="Liu W."/>
            <person name="Lloyd C."/>
            <person name="Lloyd D.M."/>
            <person name="Loulseged H."/>
            <person name="Loveland J.E."/>
            <person name="Lovell J.D."/>
            <person name="Lozado R."/>
            <person name="Lu J."/>
            <person name="Lyne R."/>
            <person name="Ma J."/>
            <person name="Maheshwari M."/>
            <person name="Matthews L.H."/>
            <person name="McDowall J."/>
            <person name="McLaren S."/>
            <person name="McMurray A."/>
            <person name="Meidl P."/>
            <person name="Meitinger T."/>
            <person name="Milne S."/>
            <person name="Miner G."/>
            <person name="Mistry S.L."/>
            <person name="Morgan M."/>
            <person name="Morris S."/>
            <person name="Mueller I."/>
            <person name="Mullikin J.C."/>
            <person name="Nguyen N."/>
            <person name="Nordsiek G."/>
            <person name="Nyakatura G."/>
            <person name="O'dell C.N."/>
            <person name="Okwuonu G."/>
            <person name="Palmer S."/>
            <person name="Pandian R."/>
            <person name="Parker D."/>
            <person name="Parrish J."/>
            <person name="Pasternak S."/>
            <person name="Patel D."/>
            <person name="Pearce A.V."/>
            <person name="Pearson D.M."/>
            <person name="Pelan S.E."/>
            <person name="Perez L."/>
            <person name="Porter K.M."/>
            <person name="Ramsey Y."/>
            <person name="Reichwald K."/>
            <person name="Rhodes S."/>
            <person name="Ridler K.A."/>
            <person name="Schlessinger D."/>
            <person name="Schueler M.G."/>
            <person name="Sehra H.K."/>
            <person name="Shaw-Smith C."/>
            <person name="Shen H."/>
            <person name="Sheridan E.M."/>
            <person name="Shownkeen R."/>
            <person name="Skuce C.D."/>
            <person name="Smith M.L."/>
            <person name="Sotheran E.C."/>
            <person name="Steingruber H.E."/>
            <person name="Steward C.A."/>
            <person name="Storey R."/>
            <person name="Swann R.M."/>
            <person name="Swarbreck D."/>
            <person name="Tabor P.E."/>
            <person name="Taudien S."/>
            <person name="Taylor T."/>
            <person name="Teague B."/>
            <person name="Thomas K."/>
            <person name="Thorpe A."/>
            <person name="Timms K."/>
            <person name="Tracey A."/>
            <person name="Trevanion S."/>
            <person name="Tromans A.C."/>
            <person name="d'Urso M."/>
            <person name="Verduzco D."/>
            <person name="Villasana D."/>
            <person name="Waldron L."/>
            <person name="Wall M."/>
            <person name="Wang Q."/>
            <person name="Warren J."/>
            <person name="Warry G.L."/>
            <person name="Wei X."/>
            <person name="West A."/>
            <person name="Whitehead S.L."/>
            <person name="Whiteley M.N."/>
            <person name="Wilkinson J.E."/>
            <person name="Willey D.L."/>
            <person name="Williams G."/>
            <person name="Williams L."/>
            <person name="Williamson A."/>
            <person name="Williamson H."/>
            <person name="Wilming L."/>
            <person name="Woodmansey R.L."/>
            <person name="Wray P.W."/>
            <person name="Yen J."/>
            <person name="Zhang J."/>
            <person name="Zhou J."/>
            <person name="Zoghbi H."/>
            <person name="Zorilla S."/>
            <person name="Buck D."/>
            <person name="Reinhardt R."/>
            <person name="Poustka A."/>
            <person name="Rosenthal A."/>
            <person name="Lehrach H."/>
            <person name="Meindl A."/>
            <person name="Minx P.J."/>
            <person name="Hillier L.W."/>
            <person name="Willard H.F."/>
            <person name="Wilson R.K."/>
            <person name="Waterston R.H."/>
            <person name="Rice C.M."/>
            <person name="Vaudin M."/>
            <person name="Coulson A."/>
            <person name="Nelson D.L."/>
            <person name="Weinstock G."/>
            <person name="Sulston J.E."/>
            <person name="Durbin R.M."/>
            <person name="Hubbard T."/>
            <person name="Gibbs R.A."/>
            <person name="Beck S."/>
            <person name="Rogers J."/>
            <person name="Bentley D.R."/>
        </authorList>
    </citation>
    <scope>NUCLEOTIDE SEQUENCE [LARGE SCALE GENOMIC DNA]</scope>
</reference>
<reference key="3">
    <citation type="submission" date="2005-09" db="EMBL/GenBank/DDBJ databases">
        <authorList>
            <person name="Mural R.J."/>
            <person name="Istrail S."/>
            <person name="Sutton G.G."/>
            <person name="Florea L."/>
            <person name="Halpern A.L."/>
            <person name="Mobarry C.M."/>
            <person name="Lippert R."/>
            <person name="Walenz B."/>
            <person name="Shatkay H."/>
            <person name="Dew I."/>
            <person name="Miller J.R."/>
            <person name="Flanigan M.J."/>
            <person name="Edwards N.J."/>
            <person name="Bolanos R."/>
            <person name="Fasulo D."/>
            <person name="Halldorsson B.V."/>
            <person name="Hannenhalli S."/>
            <person name="Turner R."/>
            <person name="Yooseph S."/>
            <person name="Lu F."/>
            <person name="Nusskern D.R."/>
            <person name="Shue B.C."/>
            <person name="Zheng X.H."/>
            <person name="Zhong F."/>
            <person name="Delcher A.L."/>
            <person name="Huson D.H."/>
            <person name="Kravitz S.A."/>
            <person name="Mouchard L."/>
            <person name="Reinert K."/>
            <person name="Remington K.A."/>
            <person name="Clark A.G."/>
            <person name="Waterman M.S."/>
            <person name="Eichler E.E."/>
            <person name="Adams M.D."/>
            <person name="Hunkapiller M.W."/>
            <person name="Myers E.W."/>
            <person name="Venter J.C."/>
        </authorList>
    </citation>
    <scope>NUCLEOTIDE SEQUENCE [LARGE SCALE GENOMIC DNA]</scope>
</reference>
<reference key="4">
    <citation type="journal article" date="2004" name="Genome Res.">
        <title>The status, quality, and expansion of the NIH full-length cDNA project: the Mammalian Gene Collection (MGC).</title>
        <authorList>
            <consortium name="The MGC Project Team"/>
        </authorList>
    </citation>
    <scope>NUCLEOTIDE SEQUENCE [LARGE SCALE MRNA]</scope>
    <source>
        <tissue>Skin</tissue>
    </source>
</reference>
<reference key="5">
    <citation type="journal article" date="1994" name="Immunogenetics">
        <title>Structure, chromosomal localization, and expression of 12 genes of the MAGE family.</title>
        <authorList>
            <person name="De Plaen E."/>
            <person name="Arden K."/>
            <person name="Traversari C."/>
            <person name="Gaforio J.J."/>
            <person name="Szikora J.-P."/>
            <person name="De Smet C."/>
            <person name="Brasseur F."/>
            <person name="van der Bruggen P."/>
            <person name="Lethe B.G."/>
            <person name="Lurquin C."/>
            <person name="Brasseur R."/>
            <person name="Chomez P."/>
            <person name="de Backer O."/>
            <person name="Cavenee W."/>
            <person name="Boon T."/>
        </authorList>
    </citation>
    <scope>NUCLEOTIDE SEQUENCE [GENOMIC DNA] OF 1-232</scope>
</reference>